<proteinExistence type="evidence at protein level"/>
<keyword id="KW-0002">3D-structure</keyword>
<keyword id="KW-1003">Cell membrane</keyword>
<keyword id="KW-0178">Competence</keyword>
<keyword id="KW-0406">Ion transport</keyword>
<keyword id="KW-0449">Lipoprotein</keyword>
<keyword id="KW-0472">Membrane</keyword>
<keyword id="KW-0564">Palmitate</keyword>
<keyword id="KW-1185">Reference proteome</keyword>
<keyword id="KW-0732">Signal</keyword>
<keyword id="KW-0813">Transport</keyword>
<keyword id="KW-0862">Zinc</keyword>
<keyword id="KW-0864">Zinc transport</keyword>
<reference key="1">
    <citation type="journal article" date="2001" name="J. Bacteriol.">
        <title>Genome of the bacterium Streptococcus pneumoniae strain R6.</title>
        <authorList>
            <person name="Hoskins J."/>
            <person name="Alborn W.E. Jr."/>
            <person name="Arnold J."/>
            <person name="Blaszczak L.C."/>
            <person name="Burgett S."/>
            <person name="DeHoff B.S."/>
            <person name="Estrem S.T."/>
            <person name="Fritz L."/>
            <person name="Fu D.-J."/>
            <person name="Fuller W."/>
            <person name="Geringer C."/>
            <person name="Gilmour R."/>
            <person name="Glass J.S."/>
            <person name="Khoja H."/>
            <person name="Kraft A.R."/>
            <person name="Lagace R.E."/>
            <person name="LeBlanc D.J."/>
            <person name="Lee L.N."/>
            <person name="Lefkowitz E.J."/>
            <person name="Lu J."/>
            <person name="Matsushima P."/>
            <person name="McAhren S.M."/>
            <person name="McHenney M."/>
            <person name="McLeaster K."/>
            <person name="Mundy C.W."/>
            <person name="Nicas T.I."/>
            <person name="Norris F.H."/>
            <person name="O'Gara M."/>
            <person name="Peery R.B."/>
            <person name="Robertson G.T."/>
            <person name="Rockey P."/>
            <person name="Sun P.-M."/>
            <person name="Winkler M.E."/>
            <person name="Yang Y."/>
            <person name="Young-Bellido M."/>
            <person name="Zhao G."/>
            <person name="Zook C.A."/>
            <person name="Baltz R.H."/>
            <person name="Jaskunas S.R."/>
            <person name="Rosteck P.R. Jr."/>
            <person name="Skatrud P.L."/>
            <person name="Glass J.I."/>
        </authorList>
    </citation>
    <scope>NUCLEOTIDE SEQUENCE [LARGE SCALE GENOMIC DNA]</scope>
    <source>
        <strain>ATCC BAA-255 / R6</strain>
    </source>
</reference>
<reference key="2">
    <citation type="journal article" date="1997" name="Res. Microbiol.">
        <title>The adc locus, which affects competence for genetic transformation in Streptococcus pneumoniae, encodes an ABC transporter with a putative lipoprotein homologous to a family of streptococcal adhesins.</title>
        <authorList>
            <person name="Dintilhac A."/>
            <person name="Claverys J.-P."/>
        </authorList>
    </citation>
    <scope>NUCLEOTIDE SEQUENCE [GENOMIC DNA] OF 1-423</scope>
</reference>
<reference key="3">
    <citation type="submission" date="1998-10" db="EMBL/GenBank/DDBJ databases">
        <title>Reevaluation of the size of the Zn-binding lipoprotein AdcA and evidence for two domains.</title>
        <authorList>
            <person name="Claverys J.-P."/>
        </authorList>
    </citation>
    <scope>SEQUENCE REVISION</scope>
</reference>
<reference key="4">
    <citation type="journal article" date="1997" name="Mol. Microbiol.">
        <title>Competence and virulence of Streptococcus pneumoniae: Adc and PsaA mutants exhibit a requirement for Zn and Mn resulting from inactivation of putative ABC metal permeases.</title>
        <authorList>
            <person name="Dintilhac A."/>
            <person name="Alloing G."/>
            <person name="Granadel C."/>
            <person name="Claverys J.-P."/>
        </authorList>
    </citation>
    <scope>FUNCTION</scope>
</reference>
<reference evidence="6 7 8 9" key="5">
    <citation type="journal article" date="2021" name="MBio">
        <title>A Trap-Door Mechanism for Zinc Acquisition by Streptococcus pneumoniae AdcA.</title>
        <authorList>
            <person name="Luo Z."/>
            <person name="Morey J.R."/>
            <person name="Deplazes E."/>
            <person name="Motygullina A."/>
            <person name="Tan A."/>
            <person name="Ganio K."/>
            <person name="Neville S.L."/>
            <person name="Eleftheriadis N."/>
            <person name="Isselstein M."/>
            <person name="Pederick V.G."/>
            <person name="Paton J.C."/>
            <person name="Cordes T."/>
            <person name="Harmer J.R."/>
            <person name="Kobe B."/>
            <person name="McDevitt C.A."/>
        </authorList>
    </citation>
    <scope>X-RAY CRYSTALLOGRAPHY (1.01 ANGSTROMS) OF 321-501 IN COMPLEX WITH ZINC</scope>
    <scope>FUNCTION</scope>
    <scope>DOMAIN</scope>
</reference>
<evidence type="ECO:0000255" key="1">
    <source>
        <dbReference type="PROSITE-ProRule" id="PRU00303"/>
    </source>
</evidence>
<evidence type="ECO:0000256" key="2">
    <source>
        <dbReference type="SAM" id="MobiDB-lite"/>
    </source>
</evidence>
<evidence type="ECO:0000269" key="3">
    <source>
    </source>
</evidence>
<evidence type="ECO:0000269" key="4">
    <source>
    </source>
</evidence>
<evidence type="ECO:0000305" key="5"/>
<evidence type="ECO:0007744" key="6">
    <source>
        <dbReference type="PDB" id="7JJ8"/>
    </source>
</evidence>
<evidence type="ECO:0007744" key="7">
    <source>
        <dbReference type="PDB" id="7JJ9"/>
    </source>
</evidence>
<evidence type="ECO:0007744" key="8">
    <source>
        <dbReference type="PDB" id="7JJA"/>
    </source>
</evidence>
<evidence type="ECO:0007744" key="9">
    <source>
        <dbReference type="PDB" id="7JJB"/>
    </source>
</evidence>
<evidence type="ECO:0007829" key="10">
    <source>
        <dbReference type="PDB" id="7JJ9"/>
    </source>
</evidence>
<evidence type="ECO:0007829" key="11">
    <source>
        <dbReference type="PDB" id="7JJA"/>
    </source>
</evidence>
<organism>
    <name type="scientific">Streptococcus pneumoniae (strain ATCC BAA-255 / R6)</name>
    <dbReference type="NCBI Taxonomy" id="171101"/>
    <lineage>
        <taxon>Bacteria</taxon>
        <taxon>Bacillati</taxon>
        <taxon>Bacillota</taxon>
        <taxon>Bacilli</taxon>
        <taxon>Lactobacillales</taxon>
        <taxon>Streptococcaceae</taxon>
        <taxon>Streptococcus</taxon>
    </lineage>
</organism>
<protein>
    <recommendedName>
        <fullName>Zinc-binding lipoprotein AdcA</fullName>
    </recommendedName>
</protein>
<feature type="signal peptide" evidence="5">
    <location>
        <begin position="1"/>
        <end position="18"/>
    </location>
</feature>
<feature type="chain" id="PRO_0000031867" description="Zinc-binding lipoprotein AdcA">
    <location>
        <begin position="19"/>
        <end position="501"/>
    </location>
</feature>
<feature type="region of interest" description="Disordered" evidence="2">
    <location>
        <begin position="116"/>
        <end position="136"/>
    </location>
</feature>
<feature type="region of interest" description="His-rich loop" evidence="3">
    <location>
        <begin position="120"/>
        <end position="136"/>
    </location>
</feature>
<feature type="compositionally biased region" description="Basic and acidic residues" evidence="2">
    <location>
        <begin position="125"/>
        <end position="136"/>
    </location>
</feature>
<feature type="binding site" evidence="3 6 7">
    <location>
        <position position="63"/>
    </location>
    <ligand>
        <name>Zn(2+)</name>
        <dbReference type="ChEBI" id="CHEBI:29105"/>
    </ligand>
</feature>
<feature type="binding site" evidence="3 6 7">
    <location>
        <position position="140"/>
    </location>
    <ligand>
        <name>Zn(2+)</name>
        <dbReference type="ChEBI" id="CHEBI:29105"/>
    </ligand>
</feature>
<feature type="binding site" evidence="3 6 7">
    <location>
        <position position="204"/>
    </location>
    <ligand>
        <name>Zn(2+)</name>
        <dbReference type="ChEBI" id="CHEBI:29105"/>
    </ligand>
</feature>
<feature type="binding site" evidence="3 6 7">
    <location>
        <position position="279"/>
    </location>
    <ligand>
        <name>Zn(2+)</name>
        <dbReference type="ChEBI" id="CHEBI:29105"/>
    </ligand>
</feature>
<feature type="lipid moiety-binding region" description="N-palmitoyl cysteine" evidence="1">
    <location>
        <position position="19"/>
    </location>
</feature>
<feature type="lipid moiety-binding region" description="S-diacylglycerol cysteine" evidence="1">
    <location>
        <position position="19"/>
    </location>
</feature>
<feature type="sequence conflict" description="In Ref. 2; CAA96185." evidence="5" ref="2">
    <original>S</original>
    <variation>T</variation>
    <location>
        <position position="158"/>
    </location>
</feature>
<feature type="sequence conflict" description="In Ref. 2; CAA96185." evidence="5" ref="2">
    <original>Q</original>
    <variation>E</variation>
    <location>
        <position position="197"/>
    </location>
</feature>
<feature type="strand" evidence="10">
    <location>
        <begin position="29"/>
        <end position="33"/>
    </location>
</feature>
<feature type="helix" evidence="10">
    <location>
        <begin position="36"/>
        <end position="46"/>
    </location>
</feature>
<feature type="helix" evidence="10">
    <location>
        <begin position="47"/>
        <end position="49"/>
    </location>
</feature>
<feature type="strand" evidence="10">
    <location>
        <begin position="50"/>
        <end position="56"/>
    </location>
</feature>
<feature type="helix" evidence="10">
    <location>
        <begin position="62"/>
        <end position="64"/>
    </location>
</feature>
<feature type="helix" evidence="10">
    <location>
        <begin position="69"/>
        <end position="76"/>
    </location>
</feature>
<feature type="strand" evidence="10">
    <location>
        <begin position="78"/>
        <end position="84"/>
    </location>
</feature>
<feature type="turn" evidence="10">
    <location>
        <begin position="86"/>
        <end position="88"/>
    </location>
</feature>
<feature type="helix" evidence="10">
    <location>
        <begin position="92"/>
        <end position="99"/>
    </location>
</feature>
<feature type="strand" evidence="10">
    <location>
        <begin position="105"/>
        <end position="108"/>
    </location>
</feature>
<feature type="turn" evidence="10">
    <location>
        <begin position="109"/>
        <end position="112"/>
    </location>
</feature>
<feature type="helix" evidence="10">
    <location>
        <begin position="141"/>
        <end position="143"/>
    </location>
</feature>
<feature type="helix" evidence="10">
    <location>
        <begin position="145"/>
        <end position="162"/>
    </location>
</feature>
<feature type="helix" evidence="10">
    <location>
        <begin position="164"/>
        <end position="166"/>
    </location>
</feature>
<feature type="helix" evidence="10">
    <location>
        <begin position="167"/>
        <end position="192"/>
    </location>
</feature>
<feature type="strand" evidence="10">
    <location>
        <begin position="199"/>
        <end position="204"/>
    </location>
</feature>
<feature type="helix" evidence="10">
    <location>
        <begin position="208"/>
        <end position="214"/>
    </location>
</feature>
<feature type="strand" evidence="10">
    <location>
        <begin position="217"/>
        <end position="220"/>
    </location>
</feature>
<feature type="helix" evidence="10">
    <location>
        <begin position="232"/>
        <end position="245"/>
    </location>
</feature>
<feature type="strand" evidence="10">
    <location>
        <begin position="249"/>
        <end position="254"/>
    </location>
</feature>
<feature type="helix" evidence="10">
    <location>
        <begin position="258"/>
        <end position="266"/>
    </location>
</feature>
<feature type="strand" evidence="10">
    <location>
        <begin position="271"/>
        <end position="274"/>
    </location>
</feature>
<feature type="helix" evidence="10">
    <location>
        <begin position="283"/>
        <end position="287"/>
    </location>
</feature>
<feature type="helix" evidence="10">
    <location>
        <begin position="292"/>
        <end position="307"/>
    </location>
</feature>
<feature type="helix" evidence="11">
    <location>
        <begin position="325"/>
        <end position="327"/>
    </location>
</feature>
<feature type="helix" evidence="11">
    <location>
        <begin position="332"/>
        <end position="334"/>
    </location>
</feature>
<feature type="helix" evidence="11">
    <location>
        <begin position="340"/>
        <end position="343"/>
    </location>
</feature>
<feature type="strand" evidence="11">
    <location>
        <begin position="345"/>
        <end position="350"/>
    </location>
</feature>
<feature type="helix" evidence="11">
    <location>
        <begin position="351"/>
        <end position="355"/>
    </location>
</feature>
<feature type="turn" evidence="11">
    <location>
        <begin position="356"/>
        <end position="359"/>
    </location>
</feature>
<feature type="helix" evidence="11">
    <location>
        <begin position="360"/>
        <end position="370"/>
    </location>
</feature>
<feature type="helix" evidence="11">
    <location>
        <begin position="375"/>
        <end position="386"/>
    </location>
</feature>
<feature type="strand" evidence="11">
    <location>
        <begin position="389"/>
        <end position="395"/>
    </location>
</feature>
<feature type="strand" evidence="11">
    <location>
        <begin position="397"/>
        <end position="404"/>
    </location>
</feature>
<feature type="strand" evidence="11">
    <location>
        <begin position="407"/>
        <end position="422"/>
    </location>
</feature>
<feature type="strand" evidence="11">
    <location>
        <begin position="428"/>
        <end position="436"/>
    </location>
</feature>
<feature type="helix" evidence="11">
    <location>
        <begin position="442"/>
        <end position="444"/>
    </location>
</feature>
<feature type="strand" evidence="11">
    <location>
        <begin position="445"/>
        <end position="450"/>
    </location>
</feature>
<feature type="strand" evidence="11">
    <location>
        <begin position="460"/>
        <end position="469"/>
    </location>
</feature>
<feature type="helix" evidence="11">
    <location>
        <begin position="471"/>
        <end position="474"/>
    </location>
</feature>
<feature type="strand" evidence="11">
    <location>
        <begin position="483"/>
        <end position="486"/>
    </location>
</feature>
<feature type="helix" evidence="11">
    <location>
        <begin position="491"/>
        <end position="499"/>
    </location>
</feature>
<sequence>MKKISLLLASLCALFLVACSNQKQADGKLNIVTTFYPVYEFTKQVAGDTANVELLIGAGTEPHEYEPSAKAVAKIQDADTFVYENENMETWVPKLLDTLDKKKVKTIKATGDMLLLPGGEEEEGDHDHGEEGHHHEFDPHVWLSPVRAIKLVEHIRDSLSADYPDKKETFEKNAAAYIEKLQSLDKAYAEGLSQAKQKSFVTQHAAFNYLALDYGLKQVAISGLSPDAEPSAARLAELTEYVKKNKIAYIYFEENASQALANTLSKEAGVKTDVLNPLESLTEEDTKAGENYISVMEKNLKALKQTTDQEGPAIEPEKAEDTKTVQNGYFEDAAVKDRTLSDYAGNWQSVYPFLEDGTFDQVFDYKAKLTGKMTQAEYKAYYTKGYQTDVTKINITDNTMEFVQGGQSKKYTYKYVGKKILTYKKGNRGVRFLFEATDADAGQFKYVQFSDHNIAPVKAEHFHIFFGGTSQETLFEEMDNWPTYYPDNLSGQEIAQEMLAH</sequence>
<accession>Q8CWN2</accession>
<comment type="function">
    <text evidence="3 4">Part of the ATP-binding cassette (ABC) transport system AdcABC involved in zinc import (PubMed:33531394, PubMed:9379902). Binds zinc with high affinity and specificity and delivers it to the membrane permease for translocation into the cytoplasm (PubMed:33531394, PubMed:9379902). Required for transformability (PubMed:9379902).</text>
</comment>
<comment type="subcellular location">
    <subcellularLocation>
        <location evidence="1">Cell membrane</location>
        <topology evidence="1">Lipid-anchor</topology>
    </subcellularLocation>
</comment>
<comment type="domain">
    <text evidence="3">The His-rich loop facilitates the closure of the zinc binding site and is required for zinc acquisition.</text>
</comment>
<comment type="similarity">
    <text evidence="5">Belongs to the bacterial solute-binding protein 9 family.</text>
</comment>
<comment type="caution">
    <text evidence="3">The C-terminal region appears to bind a second Zn(2+) via His-452, His-461 and His-463 (PubMed:33531394). Its role is unclear; it may be transferred to the main Zn(2+) binding site possibly enabling the sampling of zinc pools that are spatially inaccessible to the main Zn(2+) binding site and thereby increases the efficiency of zinc acquisition during severe zinc restriction (PubMed:33531394).</text>
</comment>
<dbReference type="EMBL" id="AE007317">
    <property type="protein sequence ID" value="AAL00777.1"/>
    <property type="molecule type" value="Genomic_DNA"/>
</dbReference>
<dbReference type="EMBL" id="Z71552">
    <property type="protein sequence ID" value="CAA96185.1"/>
    <property type="molecule type" value="Genomic_DNA"/>
</dbReference>
<dbReference type="PIR" id="D98118">
    <property type="entry name" value="D98118"/>
</dbReference>
<dbReference type="RefSeq" id="NP_359566.1">
    <property type="nucleotide sequence ID" value="NC_003098.1"/>
</dbReference>
<dbReference type="RefSeq" id="WP_000724074.1">
    <property type="nucleotide sequence ID" value="NC_003098.1"/>
</dbReference>
<dbReference type="PDB" id="7JJ8">
    <property type="method" value="X-ray"/>
    <property type="resolution" value="2.03 A"/>
    <property type="chains" value="A/B/C/D=27-325"/>
</dbReference>
<dbReference type="PDB" id="7JJ9">
    <property type="method" value="X-ray"/>
    <property type="resolution" value="1.58 A"/>
    <property type="chains" value="A=27-501"/>
</dbReference>
<dbReference type="PDB" id="7JJA">
    <property type="method" value="X-ray"/>
    <property type="resolution" value="1.01 A"/>
    <property type="chains" value="A=321-501"/>
</dbReference>
<dbReference type="PDB" id="7JJB">
    <property type="method" value="X-ray"/>
    <property type="resolution" value="1.10 A"/>
    <property type="chains" value="A=321-501"/>
</dbReference>
<dbReference type="PDBsum" id="7JJ8"/>
<dbReference type="PDBsum" id="7JJ9"/>
<dbReference type="PDBsum" id="7JJA"/>
<dbReference type="PDBsum" id="7JJB"/>
<dbReference type="SMR" id="Q8CWN2"/>
<dbReference type="STRING" id="171101.spr1975"/>
<dbReference type="KEGG" id="spr:spr1975"/>
<dbReference type="PATRIC" id="fig|171101.6.peg.2138"/>
<dbReference type="eggNOG" id="COG0803">
    <property type="taxonomic scope" value="Bacteria"/>
</dbReference>
<dbReference type="eggNOG" id="COG3443">
    <property type="taxonomic scope" value="Bacteria"/>
</dbReference>
<dbReference type="HOGENOM" id="CLU_016838_7_0_9"/>
<dbReference type="Proteomes" id="UP000000586">
    <property type="component" value="Chromosome"/>
</dbReference>
<dbReference type="GO" id="GO:0005886">
    <property type="term" value="C:plasma membrane"/>
    <property type="evidence" value="ECO:0007669"/>
    <property type="project" value="UniProtKB-SubCell"/>
</dbReference>
<dbReference type="GO" id="GO:0008270">
    <property type="term" value="F:zinc ion binding"/>
    <property type="evidence" value="ECO:0007669"/>
    <property type="project" value="InterPro"/>
</dbReference>
<dbReference type="GO" id="GO:0007155">
    <property type="term" value="P:cell adhesion"/>
    <property type="evidence" value="ECO:0007669"/>
    <property type="project" value="InterPro"/>
</dbReference>
<dbReference type="GO" id="GO:0030420">
    <property type="term" value="P:establishment of competence for transformation"/>
    <property type="evidence" value="ECO:0007669"/>
    <property type="project" value="UniProtKB-KW"/>
</dbReference>
<dbReference type="GO" id="GO:0006829">
    <property type="term" value="P:zinc ion transport"/>
    <property type="evidence" value="ECO:0007669"/>
    <property type="project" value="UniProtKB-KW"/>
</dbReference>
<dbReference type="CDD" id="cd01017">
    <property type="entry name" value="AdcA"/>
    <property type="match status" value="1"/>
</dbReference>
<dbReference type="Gene3D" id="2.40.128.20">
    <property type="match status" value="1"/>
</dbReference>
<dbReference type="Gene3D" id="3.40.50.1980">
    <property type="entry name" value="Nitrogenase molybdenum iron protein domain"/>
    <property type="match status" value="2"/>
</dbReference>
<dbReference type="InterPro" id="IPR006129">
    <property type="entry name" value="AdhesinB"/>
</dbReference>
<dbReference type="InterPro" id="IPR050492">
    <property type="entry name" value="Bact_metal-bind_prot9"/>
</dbReference>
<dbReference type="InterPro" id="IPR012674">
    <property type="entry name" value="Calycin"/>
</dbReference>
<dbReference type="InterPro" id="IPR006128">
    <property type="entry name" value="Lipoprotein_PsaA-like"/>
</dbReference>
<dbReference type="InterPro" id="IPR015304">
    <property type="entry name" value="ZinT_dom"/>
</dbReference>
<dbReference type="InterPro" id="IPR006127">
    <property type="entry name" value="ZnuA-like"/>
</dbReference>
<dbReference type="PANTHER" id="PTHR42953:SF3">
    <property type="entry name" value="HIGH-AFFINITY ZINC UPTAKE SYSTEM PROTEIN ZNUA"/>
    <property type="match status" value="1"/>
</dbReference>
<dbReference type="PANTHER" id="PTHR42953">
    <property type="entry name" value="HIGH-AFFINITY ZINC UPTAKE SYSTEM PROTEIN ZNUA-RELATED"/>
    <property type="match status" value="1"/>
</dbReference>
<dbReference type="Pfam" id="PF09223">
    <property type="entry name" value="ZinT"/>
    <property type="match status" value="1"/>
</dbReference>
<dbReference type="Pfam" id="PF01297">
    <property type="entry name" value="ZnuA"/>
    <property type="match status" value="1"/>
</dbReference>
<dbReference type="PRINTS" id="PR00691">
    <property type="entry name" value="ADHESINB"/>
</dbReference>
<dbReference type="PRINTS" id="PR00690">
    <property type="entry name" value="ADHESNFAMILY"/>
</dbReference>
<dbReference type="SUPFAM" id="SSF53807">
    <property type="entry name" value="Helical backbone' metal receptor"/>
    <property type="match status" value="1"/>
</dbReference>
<dbReference type="SUPFAM" id="SSF50814">
    <property type="entry name" value="Lipocalins"/>
    <property type="match status" value="1"/>
</dbReference>
<dbReference type="PROSITE" id="PS51257">
    <property type="entry name" value="PROKAR_LIPOPROTEIN"/>
    <property type="match status" value="1"/>
</dbReference>
<name>ADCA_STRR6</name>
<gene>
    <name type="primary">adcA</name>
    <name type="ordered locus">spr1975</name>
</gene>